<dbReference type="EMBL" id="BC074494">
    <property type="protein sequence ID" value="AAH74494.1"/>
    <property type="status" value="ALT_INIT"/>
    <property type="molecule type" value="mRNA"/>
</dbReference>
<dbReference type="EMBL" id="BC079765">
    <property type="protein sequence ID" value="AAH79765.1"/>
    <property type="status" value="ALT_INIT"/>
    <property type="molecule type" value="mRNA"/>
</dbReference>
<dbReference type="EMBL" id="BC094191">
    <property type="protein sequence ID" value="AAH94191.1"/>
    <property type="status" value="ALT_INIT"/>
    <property type="molecule type" value="mRNA"/>
</dbReference>
<dbReference type="SMR" id="Q6GLJ1"/>
<dbReference type="AGR" id="Xenbase:XB-GENE-5959054"/>
<dbReference type="Xenbase" id="XB-GENE-5959054">
    <property type="gene designation" value="btbd17.S"/>
</dbReference>
<dbReference type="OMA" id="TVLNHSM"/>
<dbReference type="OrthoDB" id="2359033at2759"/>
<dbReference type="Proteomes" id="UP000186698">
    <property type="component" value="Unplaced"/>
</dbReference>
<dbReference type="GO" id="GO:0005576">
    <property type="term" value="C:extracellular region"/>
    <property type="evidence" value="ECO:0007669"/>
    <property type="project" value="UniProtKB-SubCell"/>
</dbReference>
<dbReference type="CDD" id="cd18493">
    <property type="entry name" value="BACK_BTBD17"/>
    <property type="match status" value="1"/>
</dbReference>
<dbReference type="CDD" id="cd18292">
    <property type="entry name" value="BTB_POZ_BTBD17"/>
    <property type="match status" value="1"/>
</dbReference>
<dbReference type="Gene3D" id="1.25.40.420">
    <property type="match status" value="1"/>
</dbReference>
<dbReference type="Gene3D" id="3.30.710.10">
    <property type="entry name" value="Potassium Channel Kv1.1, Chain A"/>
    <property type="match status" value="1"/>
</dbReference>
<dbReference type="InterPro" id="IPR011705">
    <property type="entry name" value="BACK"/>
</dbReference>
<dbReference type="InterPro" id="IPR051481">
    <property type="entry name" value="BTB-POZ/Galectin-3-binding"/>
</dbReference>
<dbReference type="InterPro" id="IPR000210">
    <property type="entry name" value="BTB/POZ_dom"/>
</dbReference>
<dbReference type="InterPro" id="IPR011333">
    <property type="entry name" value="SKP1/BTB/POZ_sf"/>
</dbReference>
<dbReference type="InterPro" id="IPR056184">
    <property type="entry name" value="TRAF_BTBD17"/>
</dbReference>
<dbReference type="PANTHER" id="PTHR24410:SF12">
    <property type="entry name" value="BTB_POZ DOMAIN-CONTAINING PROTEIN 17"/>
    <property type="match status" value="1"/>
</dbReference>
<dbReference type="PANTHER" id="PTHR24410">
    <property type="entry name" value="HL07962P-RELATED"/>
    <property type="match status" value="1"/>
</dbReference>
<dbReference type="Pfam" id="PF07707">
    <property type="entry name" value="BACK"/>
    <property type="match status" value="1"/>
</dbReference>
<dbReference type="Pfam" id="PF00651">
    <property type="entry name" value="BTB"/>
    <property type="match status" value="1"/>
</dbReference>
<dbReference type="Pfam" id="PF23651">
    <property type="entry name" value="TRAF_BTBD17"/>
    <property type="match status" value="1"/>
</dbReference>
<dbReference type="SMART" id="SM00875">
    <property type="entry name" value="BACK"/>
    <property type="match status" value="1"/>
</dbReference>
<dbReference type="SMART" id="SM00225">
    <property type="entry name" value="BTB"/>
    <property type="match status" value="1"/>
</dbReference>
<dbReference type="SUPFAM" id="SSF54695">
    <property type="entry name" value="POZ domain"/>
    <property type="match status" value="1"/>
</dbReference>
<dbReference type="PROSITE" id="PS50097">
    <property type="entry name" value="BTB"/>
    <property type="match status" value="1"/>
</dbReference>
<organism>
    <name type="scientific">Xenopus laevis</name>
    <name type="common">African clawed frog</name>
    <dbReference type="NCBI Taxonomy" id="8355"/>
    <lineage>
        <taxon>Eukaryota</taxon>
        <taxon>Metazoa</taxon>
        <taxon>Chordata</taxon>
        <taxon>Craniata</taxon>
        <taxon>Vertebrata</taxon>
        <taxon>Euteleostomi</taxon>
        <taxon>Amphibia</taxon>
        <taxon>Batrachia</taxon>
        <taxon>Anura</taxon>
        <taxon>Pipoidea</taxon>
        <taxon>Pipidae</taxon>
        <taxon>Xenopodinae</taxon>
        <taxon>Xenopus</taxon>
        <taxon>Xenopus</taxon>
    </lineage>
</organism>
<keyword id="KW-1185">Reference proteome</keyword>
<keyword id="KW-0964">Secreted</keyword>
<keyword id="KW-0732">Signal</keyword>
<protein>
    <recommendedName>
        <fullName>BTB/POZ domain-containing protein 17</fullName>
    </recommendedName>
</protein>
<gene>
    <name type="primary">btbd17</name>
</gene>
<reference key="1">
    <citation type="submission" date="2005-04" db="EMBL/GenBank/DDBJ databases">
        <authorList>
            <consortium name="NIH - Xenopus Gene Collection (XGC) project"/>
        </authorList>
    </citation>
    <scope>NUCLEOTIDE SEQUENCE [LARGE SCALE MRNA]</scope>
    <source>
        <tissue>Brain</tissue>
        <tissue>Eye</tissue>
    </source>
</reference>
<feature type="signal peptide" evidence="1">
    <location>
        <begin position="1"/>
        <end position="18"/>
    </location>
</feature>
<feature type="chain" id="PRO_0000340706" description="BTB/POZ domain-containing protein 17">
    <location>
        <begin position="19"/>
        <end position="470"/>
    </location>
</feature>
<feature type="domain" description="BTB" evidence="2">
    <location>
        <begin position="53"/>
        <end position="122"/>
    </location>
</feature>
<feature type="domain" description="BACK">
    <location>
        <begin position="161"/>
        <end position="261"/>
    </location>
</feature>
<name>BTBDH_XENLA</name>
<accession>Q6GLJ1</accession>
<accession>Q6AX46</accession>
<evidence type="ECO:0000255" key="1"/>
<evidence type="ECO:0000255" key="2">
    <source>
        <dbReference type="PROSITE-ProRule" id="PRU00037"/>
    </source>
</evidence>
<evidence type="ECO:0000305" key="3"/>
<proteinExistence type="evidence at transcript level"/>
<comment type="subcellular location">
    <subcellularLocation>
        <location evidence="3">Secreted</location>
    </subcellularLocation>
</comment>
<comment type="sequence caution" evidence="3">
    <conflict type="erroneous initiation">
        <sequence resource="EMBL-CDS" id="AAH74494"/>
    </conflict>
</comment>
<comment type="sequence caution" evidence="3">
    <conflict type="erroneous initiation">
        <sequence resource="EMBL-CDS" id="AAH79765"/>
    </conflict>
</comment>
<comment type="sequence caution" evidence="3">
    <conflict type="erroneous initiation">
        <sequence resource="EMBL-CDS" id="AAH94191"/>
    </conflict>
</comment>
<sequence length="470" mass="53495">MRMKGLYVVPLLLALVESAQKSDLGGDASAALINHSPMLIHRLQDLLQNSNSSDTTLRIRTANSNEVKVIHTHQLLLTLQSDIFEGLLLNQSEVTLQEPAECAAVFEKFIRYFYCGEISVNLNQAIPLHRLASKYHVTALQRGITEYMKTHFASESSQGHVVSWYHYALRMGDITLQESCLKFLAWNLSTVMSSNEWVTVSDNLMVSLLQRSDLVLQSELELFNAVEEWVSKKNPDVPVIEKVLRAIRYPMITPSQLFQIQKKSVVLASYHNSVQDLMFQAFQFHSASPLHFAKYFEVNCSMFVPRNYLSPSWGSQWIINNPARDDRSLTFQTQLGPSNHDTSKKITWNALFSPRWIPVSLRPVYSESVSSSSQSNRLEEGKPRLVMTSAMSGMDFAGVTFQKTVLVGVKRQQGKVFIKHVYNVHQSTDEVFDFLLNADLQKRTSEYLIDNSLHLHIIIKPIYHSLIKAK</sequence>